<comment type="function">
    <text evidence="1">Part of the Sec protein translocase complex. Interacts with the SecYEG preprotein conducting channel. Has a central role in coupling the hydrolysis of ATP to the transfer of proteins into and across the cell membrane, serving as an ATP-driven molecular motor driving the stepwise translocation of polypeptide chains across the membrane.</text>
</comment>
<comment type="catalytic activity">
    <reaction evidence="1">
        <text>ATP + H2O + cellular proteinSide 1 = ADP + phosphate + cellular proteinSide 2.</text>
        <dbReference type="EC" id="7.4.2.8"/>
    </reaction>
</comment>
<comment type="cofactor">
    <cofactor evidence="1">
        <name>Zn(2+)</name>
        <dbReference type="ChEBI" id="CHEBI:29105"/>
    </cofactor>
    <text evidence="1">May bind 1 zinc ion per subunit.</text>
</comment>
<comment type="subunit">
    <text evidence="1">Monomer and homodimer. Part of the essential Sec protein translocation apparatus which comprises SecA, SecYEG and auxiliary proteins SecDF. Other proteins may also be involved.</text>
</comment>
<comment type="subcellular location">
    <subcellularLocation>
        <location evidence="1">Cell inner membrane</location>
        <topology evidence="1">Peripheral membrane protein</topology>
        <orientation evidence="1">Cytoplasmic side</orientation>
    </subcellularLocation>
    <subcellularLocation>
        <location evidence="1">Cytoplasm</location>
    </subcellularLocation>
    <text evidence="1">Distribution is 50-50.</text>
</comment>
<comment type="similarity">
    <text evidence="1">Belongs to the SecA family.</text>
</comment>
<feature type="chain" id="PRO_0000320733" description="Protein translocase subunit SecA">
    <location>
        <begin position="1"/>
        <end position="1106"/>
    </location>
</feature>
<feature type="region of interest" description="Disordered" evidence="2">
    <location>
        <begin position="1021"/>
        <end position="1106"/>
    </location>
</feature>
<feature type="compositionally biased region" description="Basic and acidic residues" evidence="2">
    <location>
        <begin position="1042"/>
        <end position="1056"/>
    </location>
</feature>
<feature type="compositionally biased region" description="Polar residues" evidence="2">
    <location>
        <begin position="1057"/>
        <end position="1067"/>
    </location>
</feature>
<feature type="compositionally biased region" description="Basic and acidic residues" evidence="2">
    <location>
        <begin position="1068"/>
        <end position="1085"/>
    </location>
</feature>
<feature type="binding site" evidence="1">
    <location>
        <position position="175"/>
    </location>
    <ligand>
        <name>ATP</name>
        <dbReference type="ChEBI" id="CHEBI:30616"/>
    </ligand>
</feature>
<feature type="binding site" evidence="1">
    <location>
        <begin position="193"/>
        <end position="197"/>
    </location>
    <ligand>
        <name>ATP</name>
        <dbReference type="ChEBI" id="CHEBI:30616"/>
    </ligand>
</feature>
<feature type="binding site" evidence="1">
    <location>
        <position position="694"/>
    </location>
    <ligand>
        <name>ATP</name>
        <dbReference type="ChEBI" id="CHEBI:30616"/>
    </ligand>
</feature>
<feature type="binding site" evidence="1">
    <location>
        <position position="1090"/>
    </location>
    <ligand>
        <name>Zn(2+)</name>
        <dbReference type="ChEBI" id="CHEBI:29105"/>
    </ligand>
</feature>
<feature type="binding site" evidence="1">
    <location>
        <position position="1092"/>
    </location>
    <ligand>
        <name>Zn(2+)</name>
        <dbReference type="ChEBI" id="CHEBI:29105"/>
    </ligand>
</feature>
<feature type="binding site" evidence="1">
    <location>
        <position position="1101"/>
    </location>
    <ligand>
        <name>Zn(2+)</name>
        <dbReference type="ChEBI" id="CHEBI:29105"/>
    </ligand>
</feature>
<feature type="binding site" evidence="1">
    <location>
        <position position="1102"/>
    </location>
    <ligand>
        <name>Zn(2+)</name>
        <dbReference type="ChEBI" id="CHEBI:29105"/>
    </ligand>
</feature>
<name>SECA_BACTN</name>
<organism>
    <name type="scientific">Bacteroides thetaiotaomicron (strain ATCC 29148 / DSM 2079 / JCM 5827 / CCUG 10774 / NCTC 10582 / VPI-5482 / E50)</name>
    <dbReference type="NCBI Taxonomy" id="226186"/>
    <lineage>
        <taxon>Bacteria</taxon>
        <taxon>Pseudomonadati</taxon>
        <taxon>Bacteroidota</taxon>
        <taxon>Bacteroidia</taxon>
        <taxon>Bacteroidales</taxon>
        <taxon>Bacteroidaceae</taxon>
        <taxon>Bacteroides</taxon>
    </lineage>
</organism>
<sequence length="1106" mass="126281">MGFNEFLSSIFGNKSTRDMKEIKPWVEKIKAAYPEIEALDNDALRAKTEELKKYIRESATDERAKVEELKASIESTELEDREEVFAQIDKIEKEILEKYEKALEEVLPVAFSIVKATAKRFTENEEIVVTATEFDRHLAATKDFVRIEGDKAIYQNHWNAGGNDTVWNMIHYDVQLFGGVVLHKGKIAEMATGEGKTLVATLPVFLNALTGNGVHVVTVNDYLAKRDSEWMGPLYMFHGLSVDCIDRHQPNSDARRQAYLADITFGTNNEFGFDYLRDNMAISPKDLVQRQHNYAIVDEVDSVLIDDARTPLIISGPVPKGDDQLFEQLRPLVERLVEAQKALATKYLSEAKRLIASNDKKEVEEGFLALYRSHKCLPKNKALIKFLSEQGIKAGMLKTEEIYMEQNNKRMHEVTEPLYFVIEEKLNSVDLTDKGIDLITGNSEDPTLFVLPDIAAQLSELENQNLTNEQLLEKKDELLTNYAIKSERVHTINQLLKAYTMFEKDDEYVVIDGQVKIVDEQTGRIMEGRRYSDGLHQAIEAKERVKVEAATQTFATITLQNYFRMYHKLSGMTGTAETEAGELWDIYKLDVVVIPTNRPIARKDMNDRVYKTKREKYKAVIEEIEKLVQAGRPVLVGTTSVEISEMLSKMLTMRKIEHSVLNAKLHQKEAEIVAKAGFSCAVTIATNMAGRGTDIKLSPEVKAAGGLAIIGTERHESRRVDRQLRGRAGRQGDPGSSVFFVSLEDDLMRLFSSDRIASVMDKLGFQEGEMIEHKMISNSIERAQKKVEENNFGIRKRLLEYDDVMNKQRTVVYTKRRHALMGERIGMDIVNMIWDRCANAIENNDYEGCQMELLQTLAMETPFTEEEFRNEKKDTLAEKTFNIAMENFKRKTERLAQIANPVIKQVYENQGHMYENILIPITDGKRMYNISCNLKAAYESESKEVVKAFEKSILLHVIDEAWKENLRELDELKHSVQNASYEQKDPLLIYKLESVTLFDAMVNKINNQTISILMRGQIPVQEAPADEQQPRRVEVRQAAPEQRQDMSKYREQKQDLSDPNQQAAASQDTREQQKREPIRAEKTVGRNDPCPCGSGKKYKNCHGQNA</sequence>
<reference key="1">
    <citation type="journal article" date="2003" name="Science">
        <title>A genomic view of the human-Bacteroides thetaiotaomicron symbiosis.</title>
        <authorList>
            <person name="Xu J."/>
            <person name="Bjursell M.K."/>
            <person name="Himrod J."/>
            <person name="Deng S."/>
            <person name="Carmichael L.K."/>
            <person name="Chiang H.C."/>
            <person name="Hooper L.V."/>
            <person name="Gordon J.I."/>
        </authorList>
    </citation>
    <scope>NUCLEOTIDE SEQUENCE [LARGE SCALE GENOMIC DNA]</scope>
    <source>
        <strain>ATCC 29148 / DSM 2079 / JCM 5827 / CCUG 10774 / NCTC 10582 / VPI-5482 / E50</strain>
    </source>
</reference>
<evidence type="ECO:0000255" key="1">
    <source>
        <dbReference type="HAMAP-Rule" id="MF_01382"/>
    </source>
</evidence>
<evidence type="ECO:0000256" key="2">
    <source>
        <dbReference type="SAM" id="MobiDB-lite"/>
    </source>
</evidence>
<keyword id="KW-0067">ATP-binding</keyword>
<keyword id="KW-0997">Cell inner membrane</keyword>
<keyword id="KW-1003">Cell membrane</keyword>
<keyword id="KW-0963">Cytoplasm</keyword>
<keyword id="KW-0472">Membrane</keyword>
<keyword id="KW-0479">Metal-binding</keyword>
<keyword id="KW-0547">Nucleotide-binding</keyword>
<keyword id="KW-0653">Protein transport</keyword>
<keyword id="KW-1185">Reference proteome</keyword>
<keyword id="KW-1278">Translocase</keyword>
<keyword id="KW-0811">Translocation</keyword>
<keyword id="KW-0813">Transport</keyword>
<keyword id="KW-0862">Zinc</keyword>
<protein>
    <recommendedName>
        <fullName evidence="1">Protein translocase subunit SecA</fullName>
        <ecNumber evidence="1">7.4.2.8</ecNumber>
    </recommendedName>
</protein>
<accession>Q89ZL5</accession>
<dbReference type="EC" id="7.4.2.8" evidence="1"/>
<dbReference type="EMBL" id="AE015928">
    <property type="protein sequence ID" value="AAO79467.1"/>
    <property type="molecule type" value="Genomic_DNA"/>
</dbReference>
<dbReference type="RefSeq" id="NP_813273.1">
    <property type="nucleotide sequence ID" value="NC_004663.1"/>
</dbReference>
<dbReference type="RefSeq" id="WP_008764528.1">
    <property type="nucleotide sequence ID" value="NC_004663.1"/>
</dbReference>
<dbReference type="SMR" id="Q89ZL5"/>
<dbReference type="FunCoup" id="Q89ZL5">
    <property type="interactions" value="537"/>
</dbReference>
<dbReference type="STRING" id="226186.BT_4362"/>
<dbReference type="PaxDb" id="226186-BT_4362"/>
<dbReference type="EnsemblBacteria" id="AAO79467">
    <property type="protein sequence ID" value="AAO79467"/>
    <property type="gene ID" value="BT_4362"/>
</dbReference>
<dbReference type="GeneID" id="60925539"/>
<dbReference type="KEGG" id="bth:BT_4362"/>
<dbReference type="PATRIC" id="fig|226186.12.peg.4439"/>
<dbReference type="eggNOG" id="COG0653">
    <property type="taxonomic scope" value="Bacteria"/>
</dbReference>
<dbReference type="HOGENOM" id="CLU_005314_3_0_10"/>
<dbReference type="InParanoid" id="Q89ZL5"/>
<dbReference type="OrthoDB" id="9805579at2"/>
<dbReference type="Proteomes" id="UP000001414">
    <property type="component" value="Chromosome"/>
</dbReference>
<dbReference type="GO" id="GO:0031522">
    <property type="term" value="C:cell envelope Sec protein transport complex"/>
    <property type="evidence" value="ECO:0000318"/>
    <property type="project" value="GO_Central"/>
</dbReference>
<dbReference type="GO" id="GO:0005737">
    <property type="term" value="C:cytoplasm"/>
    <property type="evidence" value="ECO:0007669"/>
    <property type="project" value="UniProtKB-SubCell"/>
</dbReference>
<dbReference type="GO" id="GO:0005886">
    <property type="term" value="C:plasma membrane"/>
    <property type="evidence" value="ECO:0000318"/>
    <property type="project" value="GO_Central"/>
</dbReference>
<dbReference type="GO" id="GO:0005524">
    <property type="term" value="F:ATP binding"/>
    <property type="evidence" value="ECO:0000318"/>
    <property type="project" value="GO_Central"/>
</dbReference>
<dbReference type="GO" id="GO:0046872">
    <property type="term" value="F:metal ion binding"/>
    <property type="evidence" value="ECO:0007669"/>
    <property type="project" value="UniProtKB-KW"/>
</dbReference>
<dbReference type="GO" id="GO:0008564">
    <property type="term" value="F:protein-exporting ATPase activity"/>
    <property type="evidence" value="ECO:0007669"/>
    <property type="project" value="UniProtKB-EC"/>
</dbReference>
<dbReference type="GO" id="GO:0065002">
    <property type="term" value="P:intracellular protein transmembrane transport"/>
    <property type="evidence" value="ECO:0007669"/>
    <property type="project" value="UniProtKB-UniRule"/>
</dbReference>
<dbReference type="GO" id="GO:0017038">
    <property type="term" value="P:protein import"/>
    <property type="evidence" value="ECO:0007669"/>
    <property type="project" value="InterPro"/>
</dbReference>
<dbReference type="GO" id="GO:0006605">
    <property type="term" value="P:protein targeting"/>
    <property type="evidence" value="ECO:0007669"/>
    <property type="project" value="UniProtKB-UniRule"/>
</dbReference>
<dbReference type="GO" id="GO:0043952">
    <property type="term" value="P:protein transport by the Sec complex"/>
    <property type="evidence" value="ECO:0000318"/>
    <property type="project" value="GO_Central"/>
</dbReference>
<dbReference type="CDD" id="cd17928">
    <property type="entry name" value="DEXDc_SecA"/>
    <property type="match status" value="1"/>
</dbReference>
<dbReference type="CDD" id="cd18803">
    <property type="entry name" value="SF2_C_secA"/>
    <property type="match status" value="1"/>
</dbReference>
<dbReference type="FunFam" id="3.40.50.300:FF:000246">
    <property type="entry name" value="Preprotein translocase subunit SecA"/>
    <property type="match status" value="1"/>
</dbReference>
<dbReference type="FunFam" id="3.40.50.300:FF:000694">
    <property type="entry name" value="Preprotein translocase subunit SecA"/>
    <property type="match status" value="1"/>
</dbReference>
<dbReference type="FunFam" id="1.10.3060.10:FF:000007">
    <property type="entry name" value="Protein translocase subunit SecA"/>
    <property type="match status" value="1"/>
</dbReference>
<dbReference type="FunFam" id="3.90.1440.10:FF:000005">
    <property type="entry name" value="Protein translocase subunit SecA"/>
    <property type="match status" value="1"/>
</dbReference>
<dbReference type="Gene3D" id="1.10.3060.10">
    <property type="entry name" value="Helical scaffold and wing domains of SecA"/>
    <property type="match status" value="1"/>
</dbReference>
<dbReference type="Gene3D" id="3.40.50.300">
    <property type="entry name" value="P-loop containing nucleotide triphosphate hydrolases"/>
    <property type="match status" value="3"/>
</dbReference>
<dbReference type="Gene3D" id="3.90.1440.10">
    <property type="entry name" value="SecA, preprotein cross-linking domain"/>
    <property type="match status" value="1"/>
</dbReference>
<dbReference type="HAMAP" id="MF_01382">
    <property type="entry name" value="SecA"/>
    <property type="match status" value="1"/>
</dbReference>
<dbReference type="InterPro" id="IPR014001">
    <property type="entry name" value="Helicase_ATP-bd"/>
</dbReference>
<dbReference type="InterPro" id="IPR001650">
    <property type="entry name" value="Helicase_C-like"/>
</dbReference>
<dbReference type="InterPro" id="IPR027417">
    <property type="entry name" value="P-loop_NTPase"/>
</dbReference>
<dbReference type="InterPro" id="IPR004027">
    <property type="entry name" value="SEC_C_motif"/>
</dbReference>
<dbReference type="InterPro" id="IPR000185">
    <property type="entry name" value="SecA"/>
</dbReference>
<dbReference type="InterPro" id="IPR020937">
    <property type="entry name" value="SecA_CS"/>
</dbReference>
<dbReference type="InterPro" id="IPR011115">
    <property type="entry name" value="SecA_DEAD"/>
</dbReference>
<dbReference type="InterPro" id="IPR014018">
    <property type="entry name" value="SecA_motor_DEAD"/>
</dbReference>
<dbReference type="InterPro" id="IPR011130">
    <property type="entry name" value="SecA_preprotein_X-link_dom"/>
</dbReference>
<dbReference type="InterPro" id="IPR044722">
    <property type="entry name" value="SecA_SF2_C"/>
</dbReference>
<dbReference type="InterPro" id="IPR011116">
    <property type="entry name" value="SecA_Wing/Scaffold"/>
</dbReference>
<dbReference type="InterPro" id="IPR036266">
    <property type="entry name" value="SecA_Wing/Scaffold_sf"/>
</dbReference>
<dbReference type="InterPro" id="IPR036670">
    <property type="entry name" value="SecA_X-link_sf"/>
</dbReference>
<dbReference type="NCBIfam" id="NF009536">
    <property type="entry name" value="PRK12901.1"/>
    <property type="match status" value="1"/>
</dbReference>
<dbReference type="PANTHER" id="PTHR30612:SF0">
    <property type="entry name" value="CHLOROPLAST PROTEIN-TRANSPORTING ATPASE"/>
    <property type="match status" value="1"/>
</dbReference>
<dbReference type="PANTHER" id="PTHR30612">
    <property type="entry name" value="SECA INNER MEMBRANE COMPONENT OF SEC PROTEIN SECRETION SYSTEM"/>
    <property type="match status" value="1"/>
</dbReference>
<dbReference type="Pfam" id="PF21090">
    <property type="entry name" value="P-loop_SecA"/>
    <property type="match status" value="1"/>
</dbReference>
<dbReference type="Pfam" id="PF02810">
    <property type="entry name" value="SEC-C"/>
    <property type="match status" value="1"/>
</dbReference>
<dbReference type="Pfam" id="PF07517">
    <property type="entry name" value="SecA_DEAD"/>
    <property type="match status" value="1"/>
</dbReference>
<dbReference type="Pfam" id="PF01043">
    <property type="entry name" value="SecA_PP_bind"/>
    <property type="match status" value="1"/>
</dbReference>
<dbReference type="Pfam" id="PF07516">
    <property type="entry name" value="SecA_SW"/>
    <property type="match status" value="1"/>
</dbReference>
<dbReference type="PRINTS" id="PR00906">
    <property type="entry name" value="SECA"/>
</dbReference>
<dbReference type="SMART" id="SM00957">
    <property type="entry name" value="SecA_DEAD"/>
    <property type="match status" value="1"/>
</dbReference>
<dbReference type="SMART" id="SM00958">
    <property type="entry name" value="SecA_PP_bind"/>
    <property type="match status" value="1"/>
</dbReference>
<dbReference type="SUPFAM" id="SSF81886">
    <property type="entry name" value="Helical scaffold and wing domains of SecA"/>
    <property type="match status" value="1"/>
</dbReference>
<dbReference type="SUPFAM" id="SSF52540">
    <property type="entry name" value="P-loop containing nucleoside triphosphate hydrolases"/>
    <property type="match status" value="2"/>
</dbReference>
<dbReference type="SUPFAM" id="SSF81767">
    <property type="entry name" value="Pre-protein crosslinking domain of SecA"/>
    <property type="match status" value="1"/>
</dbReference>
<dbReference type="PROSITE" id="PS01312">
    <property type="entry name" value="SECA"/>
    <property type="match status" value="1"/>
</dbReference>
<dbReference type="PROSITE" id="PS51196">
    <property type="entry name" value="SECA_MOTOR_DEAD"/>
    <property type="match status" value="1"/>
</dbReference>
<gene>
    <name evidence="1" type="primary">secA</name>
    <name type="ordered locus">BT_4362</name>
</gene>
<proteinExistence type="inferred from homology"/>